<feature type="chain" id="PRO_1000048240" description="Cytidylate kinase">
    <location>
        <begin position="1"/>
        <end position="218"/>
    </location>
</feature>
<feature type="binding site" evidence="1">
    <location>
        <begin position="11"/>
        <end position="19"/>
    </location>
    <ligand>
        <name>ATP</name>
        <dbReference type="ChEBI" id="CHEBI:30616"/>
    </ligand>
</feature>
<dbReference type="EC" id="2.7.4.25" evidence="1"/>
<dbReference type="EMBL" id="AE004969">
    <property type="protein sequence ID" value="AAW89333.1"/>
    <property type="molecule type" value="Genomic_DNA"/>
</dbReference>
<dbReference type="RefSeq" id="WP_003688932.1">
    <property type="nucleotide sequence ID" value="NC_002946.2"/>
</dbReference>
<dbReference type="RefSeq" id="YP_207745.1">
    <property type="nucleotide sequence ID" value="NC_002946.2"/>
</dbReference>
<dbReference type="SMR" id="Q5F904"/>
<dbReference type="STRING" id="242231.NGO_0605"/>
<dbReference type="GeneID" id="66752943"/>
<dbReference type="KEGG" id="ngo:NGO_0605"/>
<dbReference type="PATRIC" id="fig|242231.10.peg.716"/>
<dbReference type="HOGENOM" id="CLU_079959_2_0_4"/>
<dbReference type="Proteomes" id="UP000000535">
    <property type="component" value="Chromosome"/>
</dbReference>
<dbReference type="GO" id="GO:0005829">
    <property type="term" value="C:cytosol"/>
    <property type="evidence" value="ECO:0007669"/>
    <property type="project" value="TreeGrafter"/>
</dbReference>
<dbReference type="GO" id="GO:0005524">
    <property type="term" value="F:ATP binding"/>
    <property type="evidence" value="ECO:0007669"/>
    <property type="project" value="UniProtKB-UniRule"/>
</dbReference>
<dbReference type="GO" id="GO:0036430">
    <property type="term" value="F:CMP kinase activity"/>
    <property type="evidence" value="ECO:0007669"/>
    <property type="project" value="RHEA"/>
</dbReference>
<dbReference type="GO" id="GO:0036431">
    <property type="term" value="F:dCMP kinase activity"/>
    <property type="evidence" value="ECO:0007669"/>
    <property type="project" value="RHEA"/>
</dbReference>
<dbReference type="GO" id="GO:0015949">
    <property type="term" value="P:nucleobase-containing small molecule interconversion"/>
    <property type="evidence" value="ECO:0007669"/>
    <property type="project" value="TreeGrafter"/>
</dbReference>
<dbReference type="GO" id="GO:0006220">
    <property type="term" value="P:pyrimidine nucleotide metabolic process"/>
    <property type="evidence" value="ECO:0007669"/>
    <property type="project" value="UniProtKB-UniRule"/>
</dbReference>
<dbReference type="CDD" id="cd02020">
    <property type="entry name" value="CMPK"/>
    <property type="match status" value="1"/>
</dbReference>
<dbReference type="FunFam" id="3.40.50.300:FF:002405">
    <property type="entry name" value="Cytidylate kinase"/>
    <property type="match status" value="1"/>
</dbReference>
<dbReference type="Gene3D" id="3.40.50.300">
    <property type="entry name" value="P-loop containing nucleotide triphosphate hydrolases"/>
    <property type="match status" value="1"/>
</dbReference>
<dbReference type="HAMAP" id="MF_00238">
    <property type="entry name" value="Cytidyl_kinase_type1"/>
    <property type="match status" value="1"/>
</dbReference>
<dbReference type="InterPro" id="IPR003136">
    <property type="entry name" value="Cytidylate_kin"/>
</dbReference>
<dbReference type="InterPro" id="IPR011994">
    <property type="entry name" value="Cytidylate_kinase_dom"/>
</dbReference>
<dbReference type="InterPro" id="IPR027417">
    <property type="entry name" value="P-loop_NTPase"/>
</dbReference>
<dbReference type="NCBIfam" id="TIGR00017">
    <property type="entry name" value="cmk"/>
    <property type="match status" value="1"/>
</dbReference>
<dbReference type="PANTHER" id="PTHR21299:SF2">
    <property type="entry name" value="CYTIDYLATE KINASE"/>
    <property type="match status" value="1"/>
</dbReference>
<dbReference type="PANTHER" id="PTHR21299">
    <property type="entry name" value="CYTIDYLATE KINASE/PANTOATE-BETA-ALANINE LIGASE"/>
    <property type="match status" value="1"/>
</dbReference>
<dbReference type="Pfam" id="PF02224">
    <property type="entry name" value="Cytidylate_kin"/>
    <property type="match status" value="1"/>
</dbReference>
<dbReference type="SUPFAM" id="SSF52540">
    <property type="entry name" value="P-loop containing nucleoside triphosphate hydrolases"/>
    <property type="match status" value="1"/>
</dbReference>
<protein>
    <recommendedName>
        <fullName evidence="1">Cytidylate kinase</fullName>
        <shortName evidence="1">CK</shortName>
        <ecNumber evidence="1">2.7.4.25</ecNumber>
    </recommendedName>
    <alternativeName>
        <fullName evidence="1">Cytidine monophosphate kinase</fullName>
        <shortName evidence="1">CMP kinase</shortName>
    </alternativeName>
</protein>
<keyword id="KW-0067">ATP-binding</keyword>
<keyword id="KW-0963">Cytoplasm</keyword>
<keyword id="KW-0418">Kinase</keyword>
<keyword id="KW-0547">Nucleotide-binding</keyword>
<keyword id="KW-1185">Reference proteome</keyword>
<keyword id="KW-0808">Transferase</keyword>
<sequence>MNRQKVIAIDGPGASGKGTVAARVAAALGYDYLDTGALYRLTALYAQKQGVEWHDEENVSALAKKLPAVFSGNRILLDGEDVSDGIRTEAIGMGASAVAQWPKVRAALLQRQRDFLTEKGLVADGRDTGSVVFPQAELKIFLTAESKIRAERRAKQIGIPCEGFTFERILSDIETRDEADRNRKVAPLKQQPDALLLDTSRLTIEETVKKVLDWYRKV</sequence>
<gene>
    <name evidence="1" type="primary">cmk</name>
    <name type="ordered locus">NGO_0605</name>
</gene>
<proteinExistence type="inferred from homology"/>
<comment type="catalytic activity">
    <reaction evidence="1">
        <text>CMP + ATP = CDP + ADP</text>
        <dbReference type="Rhea" id="RHEA:11600"/>
        <dbReference type="ChEBI" id="CHEBI:30616"/>
        <dbReference type="ChEBI" id="CHEBI:58069"/>
        <dbReference type="ChEBI" id="CHEBI:60377"/>
        <dbReference type="ChEBI" id="CHEBI:456216"/>
        <dbReference type="EC" id="2.7.4.25"/>
    </reaction>
</comment>
<comment type="catalytic activity">
    <reaction evidence="1">
        <text>dCMP + ATP = dCDP + ADP</text>
        <dbReference type="Rhea" id="RHEA:25094"/>
        <dbReference type="ChEBI" id="CHEBI:30616"/>
        <dbReference type="ChEBI" id="CHEBI:57566"/>
        <dbReference type="ChEBI" id="CHEBI:58593"/>
        <dbReference type="ChEBI" id="CHEBI:456216"/>
        <dbReference type="EC" id="2.7.4.25"/>
    </reaction>
</comment>
<comment type="subcellular location">
    <subcellularLocation>
        <location evidence="1">Cytoplasm</location>
    </subcellularLocation>
</comment>
<comment type="similarity">
    <text evidence="1">Belongs to the cytidylate kinase family. Type 1 subfamily.</text>
</comment>
<accession>Q5F904</accession>
<name>KCY_NEIG1</name>
<evidence type="ECO:0000255" key="1">
    <source>
        <dbReference type="HAMAP-Rule" id="MF_00238"/>
    </source>
</evidence>
<organism>
    <name type="scientific">Neisseria gonorrhoeae (strain ATCC 700825 / FA 1090)</name>
    <dbReference type="NCBI Taxonomy" id="242231"/>
    <lineage>
        <taxon>Bacteria</taxon>
        <taxon>Pseudomonadati</taxon>
        <taxon>Pseudomonadota</taxon>
        <taxon>Betaproteobacteria</taxon>
        <taxon>Neisseriales</taxon>
        <taxon>Neisseriaceae</taxon>
        <taxon>Neisseria</taxon>
    </lineage>
</organism>
<reference key="1">
    <citation type="submission" date="2003-03" db="EMBL/GenBank/DDBJ databases">
        <title>The complete genome sequence of Neisseria gonorrhoeae.</title>
        <authorList>
            <person name="Lewis L.A."/>
            <person name="Gillaspy A.F."/>
            <person name="McLaughlin R.E."/>
            <person name="Gipson M."/>
            <person name="Ducey T.F."/>
            <person name="Ownbey T."/>
            <person name="Hartman K."/>
            <person name="Nydick C."/>
            <person name="Carson M.B."/>
            <person name="Vaughn J."/>
            <person name="Thomson C."/>
            <person name="Song L."/>
            <person name="Lin S."/>
            <person name="Yuan X."/>
            <person name="Najar F."/>
            <person name="Zhan M."/>
            <person name="Ren Q."/>
            <person name="Zhu H."/>
            <person name="Qi S."/>
            <person name="Kenton S.M."/>
            <person name="Lai H."/>
            <person name="White J.D."/>
            <person name="Clifton S."/>
            <person name="Roe B.A."/>
            <person name="Dyer D.W."/>
        </authorList>
    </citation>
    <scope>NUCLEOTIDE SEQUENCE [LARGE SCALE GENOMIC DNA]</scope>
    <source>
        <strain>ATCC 700825 / FA 1090</strain>
    </source>
</reference>